<dbReference type="EMBL" id="CP001083">
    <property type="protein sequence ID" value="ACQ52317.1"/>
    <property type="molecule type" value="Genomic_DNA"/>
</dbReference>
<dbReference type="RefSeq" id="WP_003360494.1">
    <property type="nucleotide sequence ID" value="NC_012658.1"/>
</dbReference>
<dbReference type="SMR" id="C3KYP8"/>
<dbReference type="KEGG" id="cbi:CLJ_B0259"/>
<dbReference type="HOGENOM" id="CLU_030805_9_3_9"/>
<dbReference type="Proteomes" id="UP000002333">
    <property type="component" value="Chromosome"/>
</dbReference>
<dbReference type="CDD" id="cd00885">
    <property type="entry name" value="cinA"/>
    <property type="match status" value="1"/>
</dbReference>
<dbReference type="Gene3D" id="3.30.70.2860">
    <property type="match status" value="1"/>
</dbReference>
<dbReference type="Gene3D" id="3.90.950.20">
    <property type="entry name" value="CinA-like"/>
    <property type="match status" value="1"/>
</dbReference>
<dbReference type="Gene3D" id="3.40.980.10">
    <property type="entry name" value="MoaB/Mog-like domain"/>
    <property type="match status" value="1"/>
</dbReference>
<dbReference type="HAMAP" id="MF_00226_B">
    <property type="entry name" value="CinA_B"/>
    <property type="match status" value="1"/>
</dbReference>
<dbReference type="InterPro" id="IPR050101">
    <property type="entry name" value="CinA"/>
</dbReference>
<dbReference type="InterPro" id="IPR036653">
    <property type="entry name" value="CinA-like_C"/>
</dbReference>
<dbReference type="InterPro" id="IPR008136">
    <property type="entry name" value="CinA_C"/>
</dbReference>
<dbReference type="InterPro" id="IPR041424">
    <property type="entry name" value="CinA_KH"/>
</dbReference>
<dbReference type="InterPro" id="IPR008135">
    <property type="entry name" value="Competence-induced_CinA"/>
</dbReference>
<dbReference type="InterPro" id="IPR036425">
    <property type="entry name" value="MoaB/Mog-like_dom_sf"/>
</dbReference>
<dbReference type="InterPro" id="IPR001453">
    <property type="entry name" value="MoaB/Mog_dom"/>
</dbReference>
<dbReference type="NCBIfam" id="TIGR00200">
    <property type="entry name" value="cinA_nterm"/>
    <property type="match status" value="1"/>
</dbReference>
<dbReference type="NCBIfam" id="TIGR00177">
    <property type="entry name" value="molyb_syn"/>
    <property type="match status" value="1"/>
</dbReference>
<dbReference type="NCBIfam" id="TIGR00199">
    <property type="entry name" value="PncC_domain"/>
    <property type="match status" value="1"/>
</dbReference>
<dbReference type="NCBIfam" id="NF001813">
    <property type="entry name" value="PRK00549.1"/>
    <property type="match status" value="1"/>
</dbReference>
<dbReference type="PANTHER" id="PTHR13939">
    <property type="entry name" value="NICOTINAMIDE-NUCLEOTIDE AMIDOHYDROLASE PNCC"/>
    <property type="match status" value="1"/>
</dbReference>
<dbReference type="PANTHER" id="PTHR13939:SF0">
    <property type="entry name" value="NMN AMIDOHYDROLASE-LIKE PROTEIN YFAY"/>
    <property type="match status" value="1"/>
</dbReference>
<dbReference type="Pfam" id="PF02464">
    <property type="entry name" value="CinA"/>
    <property type="match status" value="1"/>
</dbReference>
<dbReference type="Pfam" id="PF18146">
    <property type="entry name" value="CinA_KH"/>
    <property type="match status" value="1"/>
</dbReference>
<dbReference type="Pfam" id="PF00994">
    <property type="entry name" value="MoCF_biosynth"/>
    <property type="match status" value="1"/>
</dbReference>
<dbReference type="PIRSF" id="PIRSF006728">
    <property type="entry name" value="CinA"/>
    <property type="match status" value="1"/>
</dbReference>
<dbReference type="SMART" id="SM00852">
    <property type="entry name" value="MoCF_biosynth"/>
    <property type="match status" value="1"/>
</dbReference>
<dbReference type="SUPFAM" id="SSF142433">
    <property type="entry name" value="CinA-like"/>
    <property type="match status" value="1"/>
</dbReference>
<dbReference type="SUPFAM" id="SSF53218">
    <property type="entry name" value="Molybdenum cofactor biosynthesis proteins"/>
    <property type="match status" value="1"/>
</dbReference>
<gene>
    <name evidence="1" type="primary">cinA</name>
    <name type="ordered locus">CLJ_B0259</name>
</gene>
<accession>C3KYP8</accession>
<feature type="chain" id="PRO_1000204321" description="Putative competence-damage inducible protein">
    <location>
        <begin position="1"/>
        <end position="409"/>
    </location>
</feature>
<reference key="1">
    <citation type="submission" date="2008-05" db="EMBL/GenBank/DDBJ databases">
        <title>Genome sequence of Clostridium botulinum Ba4 strain 657.</title>
        <authorList>
            <person name="Shrivastava S."/>
            <person name="Brown J.L."/>
            <person name="Bruce D."/>
            <person name="Detter C."/>
            <person name="Munk C."/>
            <person name="Smith L.A."/>
            <person name="Smith T.J."/>
            <person name="Sutton G."/>
            <person name="Brettin T.S."/>
        </authorList>
    </citation>
    <scope>NUCLEOTIDE SEQUENCE [LARGE SCALE GENOMIC DNA]</scope>
    <source>
        <strain>657 / Type Ba4</strain>
    </source>
</reference>
<sequence>MKAEILCVGTELLLGDIVNTNAQYISKELANIGIEVYHHSVIGDNENRLLKELERAFNYCDLVITTGGLGPTKDDLTKESVAKFFQEDLVLHEKSLKQIEKRLSCFNKSMTESNRKQAYFPKNCEILENPNGTAPGFIIEKDNKIAIILPGPPYEMQPMFENKVIPYLEKLTNSTIKSKVLRITGIGESDVADLISDILESQTNPTVAPYAKQGETTLRITAKANSEEKALSLIVPIEKKIRQILGDNIYGSGETLLEEVVANILVKRNLTIATAESCTGGLLAGKLINFPGISSVFLEGAITYSNESKINRLNVKKETLEKYTAVSKEVALEMAEGIAKSAGTNIGISTTGVAGPGGGTYDKPIGLIYIGLYINGKTFVEELNYSGNRQFIRNITVTRALDFLRRNLE</sequence>
<proteinExistence type="inferred from homology"/>
<evidence type="ECO:0000255" key="1">
    <source>
        <dbReference type="HAMAP-Rule" id="MF_00226"/>
    </source>
</evidence>
<name>CINA_CLOB6</name>
<organism>
    <name type="scientific">Clostridium botulinum (strain 657 / Type Ba4)</name>
    <dbReference type="NCBI Taxonomy" id="515621"/>
    <lineage>
        <taxon>Bacteria</taxon>
        <taxon>Bacillati</taxon>
        <taxon>Bacillota</taxon>
        <taxon>Clostridia</taxon>
        <taxon>Eubacteriales</taxon>
        <taxon>Clostridiaceae</taxon>
        <taxon>Clostridium</taxon>
    </lineage>
</organism>
<comment type="similarity">
    <text evidence="1">Belongs to the CinA family.</text>
</comment>
<protein>
    <recommendedName>
        <fullName evidence="1">Putative competence-damage inducible protein</fullName>
    </recommendedName>
</protein>